<protein>
    <recommendedName>
        <fullName>Esterase EstA</fullName>
        <ecNumber>3.1.1.1</ecNumber>
    </recommendedName>
</protein>
<accession>Q6B6R8</accession>
<proteinExistence type="inferred from homology"/>
<name>ESTA_PSEPU</name>
<evidence type="ECO:0000250" key="1"/>
<evidence type="ECO:0000255" key="2"/>
<evidence type="ECO:0000255" key="3">
    <source>
        <dbReference type="PROSITE-ProRule" id="PRU00556"/>
    </source>
</evidence>
<evidence type="ECO:0000269" key="4">
    <source>
    </source>
</evidence>
<evidence type="ECO:0000305" key="5"/>
<organism>
    <name type="scientific">Pseudomonas putida</name>
    <name type="common">Arthrobacter siderocapsulatus</name>
    <dbReference type="NCBI Taxonomy" id="303"/>
    <lineage>
        <taxon>Bacteria</taxon>
        <taxon>Pseudomonadati</taxon>
        <taxon>Pseudomonadota</taxon>
        <taxon>Gammaproteobacteria</taxon>
        <taxon>Pseudomonadales</taxon>
        <taxon>Pseudomonadaceae</taxon>
        <taxon>Pseudomonas</taxon>
    </lineage>
</organism>
<comment type="catalytic activity">
    <reaction>
        <text>a carboxylic ester + H2O = an alcohol + a carboxylate + H(+)</text>
        <dbReference type="Rhea" id="RHEA:21164"/>
        <dbReference type="ChEBI" id="CHEBI:15377"/>
        <dbReference type="ChEBI" id="CHEBI:15378"/>
        <dbReference type="ChEBI" id="CHEBI:29067"/>
        <dbReference type="ChEBI" id="CHEBI:30879"/>
        <dbReference type="ChEBI" id="CHEBI:33308"/>
        <dbReference type="EC" id="3.1.1.1"/>
    </reaction>
</comment>
<comment type="subcellular location">
    <subcellularLocation>
        <location evidence="4">Cell outer membrane</location>
        <topology evidence="4">Multi-pass membrane protein</topology>
    </subcellularLocation>
</comment>
<comment type="domain">
    <text>Contains a C-terminal autotransporter domain that integrates into the outer membrane and enables the translocation of the catalytic N-terminal domain to the bacterial cell surface.</text>
</comment>
<comment type="similarity">
    <text evidence="5">Belongs to the 'GDSL' lipolytic enzyme family.</text>
</comment>
<feature type="signal peptide" evidence="2">
    <location>
        <begin position="1"/>
        <end position="24"/>
    </location>
</feature>
<feature type="chain" id="PRO_0000017846" description="Esterase EstA">
    <location>
        <begin position="25"/>
        <end position="646"/>
    </location>
</feature>
<feature type="topological domain" description="Extracellular" evidence="2">
    <location>
        <begin position="25"/>
        <end position="397"/>
    </location>
</feature>
<feature type="transmembrane region" description="Beta stranded" evidence="2">
    <location>
        <begin position="398"/>
        <end position="408"/>
    </location>
</feature>
<feature type="topological domain" description="Periplasmic" evidence="2">
    <location>
        <begin position="409"/>
        <end position="410"/>
    </location>
</feature>
<feature type="transmembrane region" description="Beta stranded" evidence="2">
    <location>
        <begin position="411"/>
        <end position="421"/>
    </location>
</feature>
<feature type="topological domain" description="Extracellular" evidence="2">
    <location>
        <begin position="422"/>
        <end position="437"/>
    </location>
</feature>
<feature type="transmembrane region" description="Beta stranded" evidence="2">
    <location>
        <begin position="438"/>
        <end position="447"/>
    </location>
</feature>
<feature type="topological domain" description="Periplasmic" evidence="2">
    <location>
        <begin position="448"/>
        <end position="451"/>
    </location>
</feature>
<feature type="transmembrane region" description="Beta stranded" evidence="2">
    <location>
        <begin position="452"/>
        <end position="461"/>
    </location>
</feature>
<feature type="topological domain" description="Extracellular" evidence="2">
    <location>
        <begin position="462"/>
        <end position="488"/>
    </location>
</feature>
<feature type="transmembrane region" description="Beta stranded" evidence="2">
    <location>
        <begin position="489"/>
        <end position="500"/>
    </location>
</feature>
<feature type="topological domain" description="Periplasmic" evidence="2">
    <location>
        <begin position="501"/>
        <end position="507"/>
    </location>
</feature>
<feature type="transmembrane region" description="Beta stranded" evidence="2">
    <location>
        <begin position="508"/>
        <end position="518"/>
    </location>
</feature>
<feature type="topological domain" description="Extracellular" evidence="2">
    <location>
        <begin position="519"/>
        <end position="547"/>
    </location>
</feature>
<feature type="transmembrane region" description="Beta stranded" evidence="2">
    <location>
        <begin position="548"/>
        <end position="558"/>
    </location>
</feature>
<feature type="topological domain" description="Periplasmic" evidence="2">
    <location>
        <begin position="559"/>
        <end position="561"/>
    </location>
</feature>
<feature type="transmembrane region" description="Beta stranded" evidence="2">
    <location>
        <begin position="562"/>
        <end position="571"/>
    </location>
</feature>
<feature type="topological domain" description="Extracellular" evidence="2">
    <location>
        <begin position="572"/>
        <end position="605"/>
    </location>
</feature>
<feature type="transmembrane region" description="Beta stranded" evidence="2">
    <location>
        <begin position="606"/>
        <end position="615"/>
    </location>
</feature>
<feature type="topological domain" description="Periplasmic" evidence="2">
    <location>
        <begin position="616"/>
        <end position="618"/>
    </location>
</feature>
<feature type="transmembrane region" description="Beta stranded" evidence="2">
    <location>
        <begin position="619"/>
        <end position="628"/>
    </location>
</feature>
<feature type="topological domain" description="Extracellular" evidence="2">
    <location>
        <begin position="629"/>
        <end position="636"/>
    </location>
</feature>
<feature type="transmembrane region" description="Beta stranded" evidence="2">
    <location>
        <begin position="637"/>
        <end position="646"/>
    </location>
</feature>
<feature type="domain" description="Autotransporter" evidence="3">
    <location>
        <begin position="366"/>
        <end position="646"/>
    </location>
</feature>
<feature type="active site" description="Nucleophile" evidence="1">
    <location>
        <position position="38"/>
    </location>
</feature>
<feature type="active site" evidence="1">
    <location>
        <position position="310"/>
    </location>
</feature>
<feature type="active site" evidence="1">
    <location>
        <position position="313"/>
    </location>
</feature>
<sequence>MIRMALKPLVAACLLASLSTAPQAAPSPYSTLVVFGDSLSDAGQFPDPAGPAGSTSRFTNRVGPTYQNGSGEIFGPTAPMLLGNQLGIAPGDLAASTSPVNAQQGIADGNNWAVGGYRTDQIYDSITAANGSLIERDNTLLRSRDGYLVDRARQGLGADPNALYYITGGGNDFLQGRILNDVQAQQAAGRLVDSVQALQQAGARYIVVWLLPDLGLTPATFGGPLQPFASQLSGTFNAELTAQLSQAGANVIPLNIPLLLKEGMANPASFGLAADQNLIGTCFSGNGCTMNPTYGINGSTPDPSKLLFNDSVHPTITGQRLIADYTYSLLSAPWELTLLPEMAHGTLRAYQDELRSQWQADWENWQNVGQWRGFVGGGGQRLDFDSQDSAASGDGNGYNLTLGGSYRIDEAWRAGVAAGFYRQKLEAGAKDSDYRMNSYMASAFVQYQENRWWADAALTGGYLDYDDLKRKFALGGGERSEKGDTNGHLWAFSARLGYDIAQQADSPWHLSPFVSADYARVEVDGYSEKGASATALDYDDQKRSSKRLGAGLQGKYAFGSDTQLFAEYAHEREYEDDTQDLTMSLNSLPGNRFTLEGYTPQDHLNRVSLGFSQKLAPELSLRGGYNWRKGEDDTQQSVSLALSLDF</sequence>
<gene>
    <name type="primary">estA</name>
</gene>
<reference key="1">
    <citation type="journal article" date="2004" name="Appl. Environ. Microbiol.">
        <title>Use of Pseudomonas putida EstA as an anchoring motif for display of a periplasmic enzyme on the surface of Escherichia coli.</title>
        <authorList>
            <person name="Yang T.H."/>
            <person name="Pan J.G."/>
            <person name="Seo Y.S."/>
            <person name="Rhee J.S."/>
        </authorList>
    </citation>
    <scope>NUCLEOTIDE SEQUENCE [GENOMIC DNA]</scope>
    <scope>SUBCELLULAR LOCATION</scope>
    <source>
        <strain>3SK</strain>
    </source>
</reference>
<keyword id="KW-0998">Cell outer membrane</keyword>
<keyword id="KW-0378">Hydrolase</keyword>
<keyword id="KW-0472">Membrane</keyword>
<keyword id="KW-0732">Signal</keyword>
<keyword id="KW-0812">Transmembrane</keyword>
<keyword id="KW-1134">Transmembrane beta strand</keyword>
<dbReference type="EC" id="3.1.1.1"/>
<dbReference type="EMBL" id="AY676875">
    <property type="protein sequence ID" value="AAT77203.1"/>
    <property type="molecule type" value="Genomic_DNA"/>
</dbReference>
<dbReference type="SMR" id="Q6B6R8"/>
<dbReference type="GO" id="GO:0009279">
    <property type="term" value="C:cell outer membrane"/>
    <property type="evidence" value="ECO:0007669"/>
    <property type="project" value="UniProtKB-SubCell"/>
</dbReference>
<dbReference type="GO" id="GO:0106435">
    <property type="term" value="F:carboxylesterase activity"/>
    <property type="evidence" value="ECO:0007669"/>
    <property type="project" value="UniProtKB-EC"/>
</dbReference>
<dbReference type="GO" id="GO:0016298">
    <property type="term" value="F:lipase activity"/>
    <property type="evidence" value="ECO:0007669"/>
    <property type="project" value="InterPro"/>
</dbReference>
<dbReference type="GO" id="GO:0006629">
    <property type="term" value="P:lipid metabolic process"/>
    <property type="evidence" value="ECO:0007669"/>
    <property type="project" value="InterPro"/>
</dbReference>
<dbReference type="CDD" id="cd01847">
    <property type="entry name" value="Triacylglycerol_lipase_like"/>
    <property type="match status" value="1"/>
</dbReference>
<dbReference type="FunFam" id="2.40.128.130:FF:000004">
    <property type="entry name" value="Autotransporter domain-containing esterase"/>
    <property type="match status" value="1"/>
</dbReference>
<dbReference type="FunFam" id="3.40.50.1110:FF:000027">
    <property type="entry name" value="Esterase EstA"/>
    <property type="match status" value="1"/>
</dbReference>
<dbReference type="Gene3D" id="2.40.128.130">
    <property type="entry name" value="Autotransporter beta-domain"/>
    <property type="match status" value="1"/>
</dbReference>
<dbReference type="Gene3D" id="3.40.50.1110">
    <property type="entry name" value="SGNH hydrolase"/>
    <property type="match status" value="1"/>
</dbReference>
<dbReference type="InterPro" id="IPR005546">
    <property type="entry name" value="Autotransporte_beta"/>
</dbReference>
<dbReference type="InterPro" id="IPR036709">
    <property type="entry name" value="Autotransporte_beta_dom_sf"/>
</dbReference>
<dbReference type="InterPro" id="IPR048099">
    <property type="entry name" value="Esterase_EstP/EstA"/>
</dbReference>
<dbReference type="InterPro" id="IPR001087">
    <property type="entry name" value="GDSL"/>
</dbReference>
<dbReference type="InterPro" id="IPR050592">
    <property type="entry name" value="GDSL_lipolytic_enzyme"/>
</dbReference>
<dbReference type="InterPro" id="IPR017186">
    <property type="entry name" value="Lipase_autotranspt_EstA"/>
</dbReference>
<dbReference type="InterPro" id="IPR008265">
    <property type="entry name" value="Lipase_GDSL_AS"/>
</dbReference>
<dbReference type="InterPro" id="IPR036514">
    <property type="entry name" value="SGNH_hydro_sf"/>
</dbReference>
<dbReference type="NCBIfam" id="NF041609">
    <property type="entry name" value="esterase_EstP"/>
    <property type="match status" value="1"/>
</dbReference>
<dbReference type="PANTHER" id="PTHR45642">
    <property type="entry name" value="GDSL ESTERASE/LIPASE EXL3"/>
    <property type="match status" value="1"/>
</dbReference>
<dbReference type="PANTHER" id="PTHR45642:SF139">
    <property type="entry name" value="SGNH HYDROLASE-TYPE ESTERASE DOMAIN-CONTAINING PROTEIN"/>
    <property type="match status" value="1"/>
</dbReference>
<dbReference type="Pfam" id="PF03797">
    <property type="entry name" value="Autotransporter"/>
    <property type="match status" value="1"/>
</dbReference>
<dbReference type="Pfam" id="PF00657">
    <property type="entry name" value="Lipase_GDSL"/>
    <property type="match status" value="1"/>
</dbReference>
<dbReference type="PIRSF" id="PIRSF037375">
    <property type="entry name" value="Autotrns_EstA"/>
    <property type="match status" value="1"/>
</dbReference>
<dbReference type="SMART" id="SM00869">
    <property type="entry name" value="Autotransporter"/>
    <property type="match status" value="1"/>
</dbReference>
<dbReference type="SUPFAM" id="SSF103515">
    <property type="entry name" value="Autotransporter"/>
    <property type="match status" value="1"/>
</dbReference>
<dbReference type="SUPFAM" id="SSF52266">
    <property type="entry name" value="SGNH hydrolase"/>
    <property type="match status" value="1"/>
</dbReference>
<dbReference type="PROSITE" id="PS51208">
    <property type="entry name" value="AUTOTRANSPORTER"/>
    <property type="match status" value="1"/>
</dbReference>
<dbReference type="PROSITE" id="PS01098">
    <property type="entry name" value="LIPASE_GDSL_SER"/>
    <property type="match status" value="1"/>
</dbReference>